<feature type="chain" id="PRO_0000320589" description="Probable ubiquitin carboxyl-terminal hydrolase MINDY-4">
    <location>
        <begin position="1"/>
        <end position="763"/>
    </location>
</feature>
<feature type="region of interest" description="Disordered" evidence="5">
    <location>
        <begin position="154"/>
        <end position="368"/>
    </location>
</feature>
<feature type="compositionally biased region" description="Basic and acidic residues" evidence="5">
    <location>
        <begin position="180"/>
        <end position="202"/>
    </location>
</feature>
<feature type="compositionally biased region" description="Polar residues" evidence="5">
    <location>
        <begin position="252"/>
        <end position="261"/>
    </location>
</feature>
<feature type="compositionally biased region" description="Low complexity" evidence="5">
    <location>
        <begin position="267"/>
        <end position="278"/>
    </location>
</feature>
<feature type="compositionally biased region" description="Basic and acidic residues" evidence="5">
    <location>
        <begin position="346"/>
        <end position="355"/>
    </location>
</feature>
<feature type="compositionally biased region" description="Polar residues" evidence="5">
    <location>
        <begin position="357"/>
        <end position="368"/>
    </location>
</feature>
<feature type="active site" description="Nucleophile" evidence="3">
    <location>
        <position position="463"/>
    </location>
</feature>
<feature type="active site" description="Proton acceptor" evidence="3">
    <location>
        <position position="683"/>
    </location>
</feature>
<feature type="modified residue" description="Phosphoserine" evidence="1">
    <location>
        <position position="143"/>
    </location>
</feature>
<feature type="modified residue" description="Phosphoserine" evidence="2">
    <location>
        <position position="220"/>
    </location>
</feature>
<feature type="modified residue" description="Phosphoserine" evidence="2">
    <location>
        <position position="224"/>
    </location>
</feature>
<feature type="modified residue" description="Phosphoserine" evidence="2">
    <location>
        <position position="296"/>
    </location>
</feature>
<reference key="1">
    <citation type="submission" date="2006-10" db="EMBL/GenBank/DDBJ databases">
        <authorList>
            <consortium name="NIH - Mammalian Gene Collection (MGC) project"/>
        </authorList>
    </citation>
    <scope>NUCLEOTIDE SEQUENCE [LARGE SCALE MRNA]</scope>
    <source>
        <strain>Crossbred X Angus</strain>
        <tissue>Liver</tissue>
    </source>
</reference>
<name>MINY4_BOVIN</name>
<dbReference type="EC" id="3.4.19.12"/>
<dbReference type="EMBL" id="BC126671">
    <property type="protein sequence ID" value="AAI26672.1"/>
    <property type="molecule type" value="mRNA"/>
</dbReference>
<dbReference type="RefSeq" id="NP_001073788.1">
    <property type="nucleotide sequence ID" value="NM_001080319.2"/>
</dbReference>
<dbReference type="FunCoup" id="A1A4L4">
    <property type="interactions" value="202"/>
</dbReference>
<dbReference type="STRING" id="9913.ENSBTAP00000012360"/>
<dbReference type="PaxDb" id="9913-ENSBTAP00000012360"/>
<dbReference type="GeneID" id="615509"/>
<dbReference type="KEGG" id="bta:615509"/>
<dbReference type="CTD" id="84182"/>
<dbReference type="eggNOG" id="KOG2871">
    <property type="taxonomic scope" value="Eukaryota"/>
</dbReference>
<dbReference type="InParanoid" id="A1A4L4"/>
<dbReference type="OrthoDB" id="10263628at2759"/>
<dbReference type="Proteomes" id="UP000009136">
    <property type="component" value="Unplaced"/>
</dbReference>
<dbReference type="GO" id="GO:0004843">
    <property type="term" value="F:cysteine-type deubiquitinase activity"/>
    <property type="evidence" value="ECO:0007669"/>
    <property type="project" value="UniProtKB-EC"/>
</dbReference>
<dbReference type="GO" id="GO:1990380">
    <property type="term" value="F:K48-linked deubiquitinase activity"/>
    <property type="evidence" value="ECO:0000318"/>
    <property type="project" value="GO_Central"/>
</dbReference>
<dbReference type="GO" id="GO:0071108">
    <property type="term" value="P:protein K48-linked deubiquitination"/>
    <property type="evidence" value="ECO:0007669"/>
    <property type="project" value="InterPro"/>
</dbReference>
<dbReference type="GO" id="GO:0006508">
    <property type="term" value="P:proteolysis"/>
    <property type="evidence" value="ECO:0007669"/>
    <property type="project" value="UniProtKB-KW"/>
</dbReference>
<dbReference type="InterPro" id="IPR025257">
    <property type="entry name" value="MINDY-3/4_CD"/>
</dbReference>
<dbReference type="InterPro" id="IPR039785">
    <property type="entry name" value="MINY3/4"/>
</dbReference>
<dbReference type="PANTHER" id="PTHR12473">
    <property type="entry name" value="UBIQUITIN CARBOXYL-TERMINAL HYDROLASE MINDY-4-RELATED"/>
    <property type="match status" value="1"/>
</dbReference>
<dbReference type="PANTHER" id="PTHR12473:SF8">
    <property type="entry name" value="UBIQUITIN CARBOXYL-TERMINAL HYDROLASE MINDY-4-RELATED"/>
    <property type="match status" value="1"/>
</dbReference>
<dbReference type="Pfam" id="PF13898">
    <property type="entry name" value="MINDY-3_4_CD"/>
    <property type="match status" value="1"/>
</dbReference>
<dbReference type="SMART" id="SM01174">
    <property type="entry name" value="DUF4205"/>
    <property type="match status" value="1"/>
</dbReference>
<accession>A1A4L4</accession>
<proteinExistence type="evidence at transcript level"/>
<evidence type="ECO:0000250" key="1">
    <source>
        <dbReference type="UniProtKB" id="Q3UQI9"/>
    </source>
</evidence>
<evidence type="ECO:0000250" key="2">
    <source>
        <dbReference type="UniProtKB" id="Q4G0A6"/>
    </source>
</evidence>
<evidence type="ECO:0000250" key="3">
    <source>
        <dbReference type="UniProtKB" id="Q8N5J2"/>
    </source>
</evidence>
<evidence type="ECO:0000250" key="4">
    <source>
        <dbReference type="UniProtKB" id="Q8NBR6"/>
    </source>
</evidence>
<evidence type="ECO:0000256" key="5">
    <source>
        <dbReference type="SAM" id="MobiDB-lite"/>
    </source>
</evidence>
<evidence type="ECO:0000305" key="6"/>
<protein>
    <recommendedName>
        <fullName>Probable ubiquitin carboxyl-terminal hydrolase MINDY-4</fullName>
        <ecNumber>3.4.19.12</ecNumber>
    </recommendedName>
    <alternativeName>
        <fullName>Probable deubiquitinating enzyme MINDY-4</fullName>
    </alternativeName>
</protein>
<comment type="function">
    <text evidence="4">Probable hydrolase that can remove 'Lys-48'-linked conjugated ubiquitin from proteins.</text>
</comment>
<comment type="catalytic activity">
    <reaction evidence="4">
        <text>Thiol-dependent hydrolysis of ester, thioester, amide, peptide and isopeptide bonds formed by the C-terminal Gly of ubiquitin (a 76-residue protein attached to proteins as an intracellular targeting signal).</text>
        <dbReference type="EC" id="3.4.19.12"/>
    </reaction>
</comment>
<comment type="similarity">
    <text evidence="6">Belongs to the MINDY deubiquitinase family. FAM188 subfamily.</text>
</comment>
<gene>
    <name type="primary">MINDY4</name>
    <name type="synonym">FAM188B</name>
</gene>
<sequence>MDTLFVEEVAASLIREFLSRKGLKKTYVTMDQERPRSDLSINSRNDLRKVLHLEFLYKENKAKENPLKTNLELITRYFLDHFGNIGNNVTQETRIPELSVPKKSNKLPLRSSETTLVNIYHLADEDETWRTSLSEISKARHDSLDGDVLGHFVSSKRSSHKSRPIKTVAGESPTVASAWEKTDKLPMSEPSLDTKRMGEKVRPKSGLIVRGMMAGPIASSPQDSLRKRSLRRSPALSSATQPHKEGSPQEPELSTHTSTCPTPLEGPASSTASTSRSPQGPLSELTWEKQRTSPGSPPHLPGKGLLPRGSGRWRDLSEDSPAVDSGSEAIRTPPKFSLSSGNVPKTQERPERAFERQGSQPASLRKNQLSVSNKLEGDLDVLQLEDVEDELVREEIILSPVSSVLKLQVVSKPIDLSVAKDIKTILFGSSFCCFSDEWKLQSFSFNDSVSLKYGIVQNKGGPCGVLAAVQGCVLQKLLFEGDSSADCARLQPSNARRTHCLALAIADIVWRAGGCERAVVTLASGTQHFSPTGKYKADGVLETLILHSLTCYEELVTFLQQSIHQFEAGPYGCVLLTLSAILSRSTELVRQDFDVPTSHLIGAHGYCTQELVNLLLTGKAVSNVFNDVVELDSGNGDVTLLKGISTRSDIGFLSLFEHYNVCQVGCFLKTPRFPIWVVCSESHFSVLFSQQLELLRDWRAERLFDLYYYDGLANQQEQIRLTVDTTQTVPEDRDNGLVPPLELCNRTKWKGASVNWNGSEPIL</sequence>
<organism>
    <name type="scientific">Bos taurus</name>
    <name type="common">Bovine</name>
    <dbReference type="NCBI Taxonomy" id="9913"/>
    <lineage>
        <taxon>Eukaryota</taxon>
        <taxon>Metazoa</taxon>
        <taxon>Chordata</taxon>
        <taxon>Craniata</taxon>
        <taxon>Vertebrata</taxon>
        <taxon>Euteleostomi</taxon>
        <taxon>Mammalia</taxon>
        <taxon>Eutheria</taxon>
        <taxon>Laurasiatheria</taxon>
        <taxon>Artiodactyla</taxon>
        <taxon>Ruminantia</taxon>
        <taxon>Pecora</taxon>
        <taxon>Bovidae</taxon>
        <taxon>Bovinae</taxon>
        <taxon>Bos</taxon>
    </lineage>
</organism>
<keyword id="KW-0378">Hydrolase</keyword>
<keyword id="KW-0597">Phosphoprotein</keyword>
<keyword id="KW-0645">Protease</keyword>
<keyword id="KW-1185">Reference proteome</keyword>
<keyword id="KW-0788">Thiol protease</keyword>
<keyword id="KW-0833">Ubl conjugation pathway</keyword>